<organism>
    <name type="scientific">Actinobacillus pleuropneumoniae serotype 3 (strain JL03)</name>
    <dbReference type="NCBI Taxonomy" id="434271"/>
    <lineage>
        <taxon>Bacteria</taxon>
        <taxon>Pseudomonadati</taxon>
        <taxon>Pseudomonadota</taxon>
        <taxon>Gammaproteobacteria</taxon>
        <taxon>Pasteurellales</taxon>
        <taxon>Pasteurellaceae</taxon>
        <taxon>Actinobacillus</taxon>
    </lineage>
</organism>
<keyword id="KW-0963">Cytoplasm</keyword>
<keyword id="KW-0690">Ribosome biogenesis</keyword>
<dbReference type="EMBL" id="CP000687">
    <property type="protein sequence ID" value="ABY69198.1"/>
    <property type="molecule type" value="Genomic_DNA"/>
</dbReference>
<dbReference type="RefSeq" id="WP_005604037.1">
    <property type="nucleotide sequence ID" value="NC_010278.1"/>
</dbReference>
<dbReference type="SMR" id="B0BNR3"/>
<dbReference type="KEGG" id="apj:APJL_0628"/>
<dbReference type="HOGENOM" id="CLU_070525_1_1_6"/>
<dbReference type="Proteomes" id="UP000008547">
    <property type="component" value="Chromosome"/>
</dbReference>
<dbReference type="GO" id="GO:0005829">
    <property type="term" value="C:cytosol"/>
    <property type="evidence" value="ECO:0007669"/>
    <property type="project" value="TreeGrafter"/>
</dbReference>
<dbReference type="GO" id="GO:0000028">
    <property type="term" value="P:ribosomal small subunit assembly"/>
    <property type="evidence" value="ECO:0007669"/>
    <property type="project" value="TreeGrafter"/>
</dbReference>
<dbReference type="GO" id="GO:0006412">
    <property type="term" value="P:translation"/>
    <property type="evidence" value="ECO:0007669"/>
    <property type="project" value="TreeGrafter"/>
</dbReference>
<dbReference type="CDD" id="cd01734">
    <property type="entry name" value="YlxS_C"/>
    <property type="match status" value="1"/>
</dbReference>
<dbReference type="FunFam" id="3.30.300.70:FF:000001">
    <property type="entry name" value="Ribosome maturation factor RimP"/>
    <property type="match status" value="1"/>
</dbReference>
<dbReference type="Gene3D" id="2.30.30.180">
    <property type="entry name" value="Ribosome maturation factor RimP, C-terminal domain"/>
    <property type="match status" value="1"/>
</dbReference>
<dbReference type="Gene3D" id="3.30.300.70">
    <property type="entry name" value="RimP-like superfamily, N-terminal"/>
    <property type="match status" value="1"/>
</dbReference>
<dbReference type="HAMAP" id="MF_01077">
    <property type="entry name" value="RimP"/>
    <property type="match status" value="1"/>
</dbReference>
<dbReference type="InterPro" id="IPR003728">
    <property type="entry name" value="Ribosome_maturation_RimP"/>
</dbReference>
<dbReference type="InterPro" id="IPR028998">
    <property type="entry name" value="RimP_C"/>
</dbReference>
<dbReference type="InterPro" id="IPR036847">
    <property type="entry name" value="RimP_C_sf"/>
</dbReference>
<dbReference type="InterPro" id="IPR028989">
    <property type="entry name" value="RimP_N"/>
</dbReference>
<dbReference type="InterPro" id="IPR035956">
    <property type="entry name" value="RimP_N_sf"/>
</dbReference>
<dbReference type="NCBIfam" id="NF000927">
    <property type="entry name" value="PRK00092.1-1"/>
    <property type="match status" value="1"/>
</dbReference>
<dbReference type="PANTHER" id="PTHR33867">
    <property type="entry name" value="RIBOSOME MATURATION FACTOR RIMP"/>
    <property type="match status" value="1"/>
</dbReference>
<dbReference type="PANTHER" id="PTHR33867:SF1">
    <property type="entry name" value="RIBOSOME MATURATION FACTOR RIMP"/>
    <property type="match status" value="1"/>
</dbReference>
<dbReference type="Pfam" id="PF17384">
    <property type="entry name" value="DUF150_C"/>
    <property type="match status" value="1"/>
</dbReference>
<dbReference type="Pfam" id="PF02576">
    <property type="entry name" value="RimP_N"/>
    <property type="match status" value="1"/>
</dbReference>
<dbReference type="SUPFAM" id="SSF74942">
    <property type="entry name" value="YhbC-like, C-terminal domain"/>
    <property type="match status" value="1"/>
</dbReference>
<dbReference type="SUPFAM" id="SSF75420">
    <property type="entry name" value="YhbC-like, N-terminal domain"/>
    <property type="match status" value="1"/>
</dbReference>
<feature type="chain" id="PRO_1000136728" description="Ribosome maturation factor RimP">
    <location>
        <begin position="1"/>
        <end position="153"/>
    </location>
</feature>
<sequence>MATLEQKLEELVSDTIESMGFELVGIECQRAGRFLTVRLYIDKEGGVTIDDCSDVSRQVSAILDVEDPIADKYNLEVSSPGLDRPLFTLAHYQRFIGQEIVIHLRIPMFDRRKWQGKLESVEGDLITLTVDNETRQFAFGNIQKANLVPVFNF</sequence>
<name>RIMP_ACTPJ</name>
<proteinExistence type="inferred from homology"/>
<reference key="1">
    <citation type="journal article" date="2008" name="PLoS ONE">
        <title>Genome biology of Actinobacillus pleuropneumoniae JL03, an isolate of serotype 3 prevalent in China.</title>
        <authorList>
            <person name="Xu Z."/>
            <person name="Zhou Y."/>
            <person name="Li L."/>
            <person name="Zhou R."/>
            <person name="Xiao S."/>
            <person name="Wan Y."/>
            <person name="Zhang S."/>
            <person name="Wang K."/>
            <person name="Li W."/>
            <person name="Li L."/>
            <person name="Jin H."/>
            <person name="Kang M."/>
            <person name="Dalai B."/>
            <person name="Li T."/>
            <person name="Liu L."/>
            <person name="Cheng Y."/>
            <person name="Zhang L."/>
            <person name="Xu T."/>
            <person name="Zheng H."/>
            <person name="Pu S."/>
            <person name="Wang B."/>
            <person name="Gu W."/>
            <person name="Zhang X.L."/>
            <person name="Zhu G.-F."/>
            <person name="Wang S."/>
            <person name="Zhao G.-P."/>
            <person name="Chen H."/>
        </authorList>
    </citation>
    <scope>NUCLEOTIDE SEQUENCE [LARGE SCALE GENOMIC DNA]</scope>
    <source>
        <strain>JL03</strain>
    </source>
</reference>
<accession>B0BNR3</accession>
<gene>
    <name evidence="1" type="primary">rimP</name>
    <name type="ordered locus">APJL_0628</name>
</gene>
<comment type="function">
    <text evidence="1">Required for maturation of 30S ribosomal subunits.</text>
</comment>
<comment type="subcellular location">
    <subcellularLocation>
        <location evidence="1">Cytoplasm</location>
    </subcellularLocation>
</comment>
<comment type="similarity">
    <text evidence="1">Belongs to the RimP family.</text>
</comment>
<evidence type="ECO:0000255" key="1">
    <source>
        <dbReference type="HAMAP-Rule" id="MF_01077"/>
    </source>
</evidence>
<protein>
    <recommendedName>
        <fullName evidence="1">Ribosome maturation factor RimP</fullName>
    </recommendedName>
</protein>